<reference evidence="3" key="1">
    <citation type="journal article" date="1997" name="J. Biol. Chem.">
        <title>Differential extraction and protein sequencing reveals major differences in patterns of primary cell wall proteins from plants.</title>
        <authorList>
            <person name="Robertson D."/>
            <person name="Mitchell G.P."/>
            <person name="Gilroy J.S."/>
            <person name="Gerrish C."/>
            <person name="Bolwell G.P."/>
            <person name="Slabas A.R."/>
        </authorList>
    </citation>
    <scope>PROTEIN SEQUENCE</scope>
    <scope>SUBCELLULAR LOCATION</scope>
    <source>
        <strain>cv. Landsberg erecta</strain>
    </source>
</reference>
<proteinExistence type="evidence at protein level"/>
<sequence>AVREYHWFVE</sequence>
<protein>
    <recommendedName>
        <fullName>96 kDa cell wall protein</fullName>
    </recommendedName>
</protein>
<accession>P80833</accession>
<comment type="subcellular location">
    <subcellularLocation>
        <location evidence="1">Secreted</location>
        <location evidence="1">Cell wall</location>
    </subcellularLocation>
</comment>
<evidence type="ECO:0000269" key="1">
    <source>
    </source>
</evidence>
<evidence type="ECO:0000303" key="2">
    <source>
    </source>
</evidence>
<evidence type="ECO:0000305" key="3"/>
<feature type="chain" id="PRO_0000079661" description="96 kDa cell wall protein">
    <location>
        <begin position="1"/>
        <end position="10" status="greater than"/>
    </location>
</feature>
<feature type="non-terminal residue" evidence="2">
    <location>
        <position position="10"/>
    </location>
</feature>
<organism>
    <name type="scientific">Arabidopsis thaliana</name>
    <name type="common">Mouse-ear cress</name>
    <dbReference type="NCBI Taxonomy" id="3702"/>
    <lineage>
        <taxon>Eukaryota</taxon>
        <taxon>Viridiplantae</taxon>
        <taxon>Streptophyta</taxon>
        <taxon>Embryophyta</taxon>
        <taxon>Tracheophyta</taxon>
        <taxon>Spermatophyta</taxon>
        <taxon>Magnoliopsida</taxon>
        <taxon>eudicotyledons</taxon>
        <taxon>Gunneridae</taxon>
        <taxon>Pentapetalae</taxon>
        <taxon>rosids</taxon>
        <taxon>malvids</taxon>
        <taxon>Brassicales</taxon>
        <taxon>Brassicaceae</taxon>
        <taxon>Camelineae</taxon>
        <taxon>Arabidopsis</taxon>
    </lineage>
</organism>
<keyword id="KW-0134">Cell wall</keyword>
<keyword id="KW-0903">Direct protein sequencing</keyword>
<keyword id="KW-0964">Secreted</keyword>
<name>CWP11_ARATH</name>
<dbReference type="GO" id="GO:0005576">
    <property type="term" value="C:extracellular region"/>
    <property type="evidence" value="ECO:0007669"/>
    <property type="project" value="UniProtKB-KW"/>
</dbReference>